<keyword id="KW-0010">Activator</keyword>
<keyword id="KW-0037">Angiogenesis</keyword>
<keyword id="KW-0156">Chromatin regulator</keyword>
<keyword id="KW-0238">DNA-binding</keyword>
<keyword id="KW-0479">Metal-binding</keyword>
<keyword id="KW-0539">Nucleus</keyword>
<keyword id="KW-1267">Proteomics identification</keyword>
<keyword id="KW-1185">Reference proteome</keyword>
<keyword id="KW-0677">Repeat</keyword>
<keyword id="KW-0804">Transcription</keyword>
<keyword id="KW-0805">Transcription regulation</keyword>
<keyword id="KW-0862">Zinc</keyword>
<keyword id="KW-0863">Zinc-finger</keyword>
<name>ZN304_HUMAN</name>
<sequence length="659" mass="75047">MAAAVLMDRVQSCVTFEDVFVYFSREEWELLEEAQRFLYRDVMLENFALVATLGFWCEAEHEAPSEQSVSVEGVSQVRTAESGLFQKAHPCEMCDPLLKDILHLAEHQGSHLTQKLCTRGLCRRRFSFSANFYQHQKQHNGENCFRGDDGGASFVKSCTVHMLGRSFTCREEGMDLPDSSGLFQHQTTYNRVSPCRRTECMESFPHSSSLRQHQGDYDGQMLFSCGDEGKAFLDTFTLLDSQMTHAEVRPFRCLPCGNVFKEKSALINHRKIHSGEISHVCKECGKAFIHLHHLKMHQKFHTGKRHYTCSECGKAFSRKDTLVQHQRVHTGERSYDCSECGKAYSRSSHLVQHQRIHTGERPYKCNKCGKAFSRKDTLVQHQRFHTGERPYECSECGKFFSQSSHLIEHWRIHTGARPYECIECGKFFSHNSSLIKHRRVHTGARSYVCSKCGKAFGCKDTLVQHQIIHTGARPYECSECGKAFSRKDTLVQHQKIHTGERPYECGECGKFFSHSSNLIVHQRIHTGAKPYECNECGKCFSHNSSLILHQRVHTGARPYVCSECGKAYISSSHLVQHKKVHTGARPYECSECGKFFSRNSGLILHQRVHTGEKPYVCSECGKAYSRSSHLVRHQKAHTGERAHECNSFGGPLAASLKLV</sequence>
<proteinExistence type="evidence at protein level"/>
<reference key="1">
    <citation type="journal article" date="2002" name="Biochem. Biophys. Res. Commun.">
        <title>Identification of a KRAB-containing zinc finger protein, ZNF304, by AU-motif-directed display method and initial characterization in lymphocyte activation.</title>
        <authorList>
            <person name="Sabater L."/>
            <person name="Ashhab Y."/>
            <person name="Caro P."/>
            <person name="Kolkowski E.C."/>
            <person name="Pujol-Borrell R."/>
            <person name="Dominguez O."/>
        </authorList>
    </citation>
    <scope>NUCLEOTIDE SEQUENCE [MRNA]</scope>
    <scope>VARIANT GLU-367</scope>
    <scope>TISSUE SPECIFICITY</scope>
    <source>
        <tissue>Thymus</tissue>
    </source>
</reference>
<reference key="2">
    <citation type="journal article" date="2004" name="Nature">
        <title>The DNA sequence and biology of human chromosome 19.</title>
        <authorList>
            <person name="Grimwood J."/>
            <person name="Gordon L.A."/>
            <person name="Olsen A.S."/>
            <person name="Terry A."/>
            <person name="Schmutz J."/>
            <person name="Lamerdin J.E."/>
            <person name="Hellsten U."/>
            <person name="Goodstein D."/>
            <person name="Couronne O."/>
            <person name="Tran-Gyamfi M."/>
            <person name="Aerts A."/>
            <person name="Altherr M."/>
            <person name="Ashworth L."/>
            <person name="Bajorek E."/>
            <person name="Black S."/>
            <person name="Branscomb E."/>
            <person name="Caenepeel S."/>
            <person name="Carrano A.V."/>
            <person name="Caoile C."/>
            <person name="Chan Y.M."/>
            <person name="Christensen M."/>
            <person name="Cleland C.A."/>
            <person name="Copeland A."/>
            <person name="Dalin E."/>
            <person name="Dehal P."/>
            <person name="Denys M."/>
            <person name="Detter J.C."/>
            <person name="Escobar J."/>
            <person name="Flowers D."/>
            <person name="Fotopulos D."/>
            <person name="Garcia C."/>
            <person name="Georgescu A.M."/>
            <person name="Glavina T."/>
            <person name="Gomez M."/>
            <person name="Gonzales E."/>
            <person name="Groza M."/>
            <person name="Hammon N."/>
            <person name="Hawkins T."/>
            <person name="Haydu L."/>
            <person name="Ho I."/>
            <person name="Huang W."/>
            <person name="Israni S."/>
            <person name="Jett J."/>
            <person name="Kadner K."/>
            <person name="Kimball H."/>
            <person name="Kobayashi A."/>
            <person name="Larionov V."/>
            <person name="Leem S.-H."/>
            <person name="Lopez F."/>
            <person name="Lou Y."/>
            <person name="Lowry S."/>
            <person name="Malfatti S."/>
            <person name="Martinez D."/>
            <person name="McCready P.M."/>
            <person name="Medina C."/>
            <person name="Morgan J."/>
            <person name="Nelson K."/>
            <person name="Nolan M."/>
            <person name="Ovcharenko I."/>
            <person name="Pitluck S."/>
            <person name="Pollard M."/>
            <person name="Popkie A.P."/>
            <person name="Predki P."/>
            <person name="Quan G."/>
            <person name="Ramirez L."/>
            <person name="Rash S."/>
            <person name="Retterer J."/>
            <person name="Rodriguez A."/>
            <person name="Rogers S."/>
            <person name="Salamov A."/>
            <person name="Salazar A."/>
            <person name="She X."/>
            <person name="Smith D."/>
            <person name="Slezak T."/>
            <person name="Solovyev V."/>
            <person name="Thayer N."/>
            <person name="Tice H."/>
            <person name="Tsai M."/>
            <person name="Ustaszewska A."/>
            <person name="Vo N."/>
            <person name="Wagner M."/>
            <person name="Wheeler J."/>
            <person name="Wu K."/>
            <person name="Xie G."/>
            <person name="Yang J."/>
            <person name="Dubchak I."/>
            <person name="Furey T.S."/>
            <person name="DeJong P."/>
            <person name="Dickson M."/>
            <person name="Gordon D."/>
            <person name="Eichler E.E."/>
            <person name="Pennacchio L.A."/>
            <person name="Richardson P."/>
            <person name="Stubbs L."/>
            <person name="Rokhsar D.S."/>
            <person name="Myers R.M."/>
            <person name="Rubin E.M."/>
            <person name="Lucas S.M."/>
        </authorList>
    </citation>
    <scope>NUCLEOTIDE SEQUENCE [LARGE SCALE GENOMIC DNA]</scope>
</reference>
<reference key="3">
    <citation type="journal article" date="2014" name="Elife">
        <title>A KRAS-directed transcriptional silencing pathway that mediates the CpG island methylator phenotype.</title>
        <authorList>
            <person name="Serra R.W."/>
            <person name="Fang M."/>
            <person name="Park S.M."/>
            <person name="Hutchinson L."/>
            <person name="Green M.R."/>
        </authorList>
    </citation>
    <scope>FUNCTION</scope>
    <scope>INTERACTION WITH USP28</scope>
    <scope>POSSIBLE IDENTIFICATION IN A COREPRESSOR COMPLEX</scope>
    <scope>CHROMATIN-BINDING</scope>
    <scope>DEUBIQUITINATION BY USP28</scope>
    <scope>TISSUE SPECIFICITY</scope>
    <scope>INDUCTION</scope>
</reference>
<reference key="4">
    <citation type="journal article" date="2015" name="Nat. Commun.">
        <title>The ZNF304-integrin axis protects against anoikis in cancer.</title>
        <authorList>
            <person name="Aslan B."/>
            <person name="Monroig P."/>
            <person name="Hsu M.C."/>
            <person name="Pena G.A."/>
            <person name="Rodriguez-Aguayo C."/>
            <person name="Gonzalez-Villasana V."/>
            <person name="Rupaimoole R."/>
            <person name="Nagaraja A.S."/>
            <person name="Mangala S."/>
            <person name="Han H.D."/>
            <person name="Yuca E."/>
            <person name="Wu S.Y."/>
            <person name="Ivan C."/>
            <person name="Moss T.J."/>
            <person name="Ram P.T."/>
            <person name="Wang H."/>
            <person name="Gol-Chambers A."/>
            <person name="Ozkayar O."/>
            <person name="Kanlikilicer P."/>
            <person name="Fuentes-Mattei E."/>
            <person name="Kahraman N."/>
            <person name="Pradeep S."/>
            <person name="Ozpolat B."/>
            <person name="Tucker S."/>
            <person name="Hung M.C."/>
            <person name="Baggerly K."/>
            <person name="Bartholomeusz G."/>
            <person name="Calin G."/>
            <person name="Sood A.K."/>
            <person name="Lopez-Berestein G."/>
        </authorList>
    </citation>
    <scope>FUNCTION</scope>
    <scope>DNA-BINDING</scope>
    <scope>TISSUE SPECIFICITY</scope>
</reference>
<comment type="function">
    <text evidence="4 5">Acts as a transcriptional regulator and plays a role in gene silencing (PubMed:24623306, PubMed:26081979). Probably forms a corepressor complex required for activated KRAS-mediated promoter hypermethylation and transcriptional silencing of several tumor suppressor genes (TSGs) or other tumor-related genes in colorectal cancer (CRC) cells (PubMed:24623306). Also required to maintain a transcriptionally repressive state of genes in undifferentiated embryonic stem cells (ESCs) by inducing trimethylation of 'Lys-27' of histone H3 (H3K27me3) (PubMed:24623306) in a Polycomb group (PcG) complexes-dependent manner. Associates at promoter regions of TSGs and mediates the recruitment of the corepressor complex containing the scaffolding protein TRIM28, methyltransferase DNMT1 and histone methyltransferase SETDB1 and/or the PcG complexes at those sites (PubMed:24623306). Transcription factor involved in the metastatic cascade process by inducing cell migration and proliferation and gain resistance to anoikis of ovarian carcinoma (OC) cells via integrin-mediated signaling pathways (PubMed:26081979). Associates with the ITGB1 promoter and positively regulates beta-1 integrin transcription expression (PubMed:26081979). Promotes angiogenesis (PubMed:26081979). Promotes tumor growth (PubMed:24623306, PubMed:26081979).</text>
</comment>
<comment type="subunit">
    <text evidence="4">Probably part of a corepressor complex containing ZNF304, TRIM28, SETDB1 and DNMT1; leading to promoter hypermethylation and transcriptional silencing (PubMed:24623306). Probably associates with Polycomb group (PcG) complexes; leading to trimethylation of 'Lys-27' of histone H3 (H3K27me3) (PubMed:24623306). Interacts with USP28 (PubMed:24623306).</text>
</comment>
<comment type="subcellular location">
    <subcellularLocation>
        <location evidence="8">Nucleus</location>
    </subcellularLocation>
    <text evidence="4">Associates with chromatin (PubMed:24623306).</text>
</comment>
<comment type="tissue specificity">
    <text evidence="3 4 5">Expressed in undifferentiated embryonic stem cells (ESCs) (PubMed:24623306). Expressed strongly in colorectal cancers cells (CRCs) (PubMed:24623306). Expressed strongly in ovarian carcinoma (OC) tumor cell lines compared to non-transformed ovarian epithelial cells (at protein level) (PubMed:26081979). Expressed in lymphoid tissues, thyroid, adrenal gland, prostate, pancreas and skeletal muscles (PubMed:12051768).</text>
</comment>
<comment type="induction">
    <text evidence="4">Down-regulated during embryonic stem cells (ESCs) differentiation by retinoic acid treatment (PubMed:24623306).</text>
</comment>
<comment type="PTM">
    <text evidence="4">Deubiquitinated by USP28; the deubiquitination leads to the stabilization of ZNF304 from proteolytic degradation (PubMed:24623306).</text>
</comment>
<comment type="similarity">
    <text evidence="7">Belongs to the krueppel C2H2-type zinc-finger protein family.</text>
</comment>
<protein>
    <recommendedName>
        <fullName evidence="9">Zinc finger protein 304</fullName>
    </recommendedName>
    <alternativeName>
        <fullName evidence="6">KRAB-containing zinc finger protein</fullName>
    </alternativeName>
</protein>
<evidence type="ECO:0000255" key="1">
    <source>
        <dbReference type="PROSITE-ProRule" id="PRU00042"/>
    </source>
</evidence>
<evidence type="ECO:0000255" key="2">
    <source>
        <dbReference type="PROSITE-ProRule" id="PRU00119"/>
    </source>
</evidence>
<evidence type="ECO:0000269" key="3">
    <source>
    </source>
</evidence>
<evidence type="ECO:0000269" key="4">
    <source>
    </source>
</evidence>
<evidence type="ECO:0000269" key="5">
    <source>
    </source>
</evidence>
<evidence type="ECO:0000303" key="6">
    <source>
    </source>
</evidence>
<evidence type="ECO:0000305" key="7"/>
<evidence type="ECO:0000305" key="8">
    <source>
    </source>
</evidence>
<evidence type="ECO:0000312" key="9">
    <source>
        <dbReference type="HGNC" id="HGNC:13505"/>
    </source>
</evidence>
<dbReference type="EMBL" id="AJ276316">
    <property type="protein sequence ID" value="CAC06610.1"/>
    <property type="molecule type" value="mRNA"/>
</dbReference>
<dbReference type="EMBL" id="AC005261">
    <property type="status" value="NOT_ANNOTATED_CDS"/>
    <property type="molecule type" value="Genomic_DNA"/>
</dbReference>
<dbReference type="CCDS" id="CCDS12950.1"/>
<dbReference type="RefSeq" id="NP_065708.2">
    <property type="nucleotide sequence ID" value="NM_020657.4"/>
</dbReference>
<dbReference type="SMR" id="Q9HCX3"/>
<dbReference type="BioGRID" id="121493">
    <property type="interactions" value="5"/>
</dbReference>
<dbReference type="CORUM" id="Q9HCX3"/>
<dbReference type="FunCoup" id="Q9HCX3">
    <property type="interactions" value="51"/>
</dbReference>
<dbReference type="IntAct" id="Q9HCX3">
    <property type="interactions" value="20"/>
</dbReference>
<dbReference type="STRING" id="9606.ENSP00000401642"/>
<dbReference type="GlyGen" id="Q9HCX3">
    <property type="glycosylation" value="1 site, 1 O-linked glycan (1 site)"/>
</dbReference>
<dbReference type="iPTMnet" id="Q9HCX3"/>
<dbReference type="PhosphoSitePlus" id="Q9HCX3"/>
<dbReference type="BioMuta" id="ZNF304"/>
<dbReference type="DMDM" id="296453049"/>
<dbReference type="jPOST" id="Q9HCX3"/>
<dbReference type="MassIVE" id="Q9HCX3"/>
<dbReference type="PaxDb" id="9606-ENSP00000375586"/>
<dbReference type="PeptideAtlas" id="Q9HCX3"/>
<dbReference type="ProteomicsDB" id="81804"/>
<dbReference type="Antibodypedia" id="46525">
    <property type="antibodies" value="19 antibodies from 11 providers"/>
</dbReference>
<dbReference type="DNASU" id="57343"/>
<dbReference type="Ensembl" id="ENST00000282286.6">
    <property type="protein sequence ID" value="ENSP00000282286.4"/>
    <property type="gene ID" value="ENSG00000131845.15"/>
</dbReference>
<dbReference type="Ensembl" id="ENST00000391705.7">
    <property type="protein sequence ID" value="ENSP00000375586.3"/>
    <property type="gene ID" value="ENSG00000131845.15"/>
</dbReference>
<dbReference type="GeneID" id="57343"/>
<dbReference type="KEGG" id="hsa:57343"/>
<dbReference type="MANE-Select" id="ENST00000282286.6">
    <property type="protein sequence ID" value="ENSP00000282286.4"/>
    <property type="RefSeq nucleotide sequence ID" value="NM_020657.4"/>
    <property type="RefSeq protein sequence ID" value="NP_065708.2"/>
</dbReference>
<dbReference type="UCSC" id="uc010ygw.3">
    <property type="organism name" value="human"/>
</dbReference>
<dbReference type="AGR" id="HGNC:13505"/>
<dbReference type="CTD" id="57343"/>
<dbReference type="DisGeNET" id="57343"/>
<dbReference type="GeneCards" id="ZNF304"/>
<dbReference type="HGNC" id="HGNC:13505">
    <property type="gene designation" value="ZNF304"/>
</dbReference>
<dbReference type="HPA" id="ENSG00000131845">
    <property type="expression patterns" value="Low tissue specificity"/>
</dbReference>
<dbReference type="MalaCards" id="ZNF304"/>
<dbReference type="MIM" id="613840">
    <property type="type" value="gene"/>
</dbReference>
<dbReference type="neXtProt" id="NX_Q9HCX3"/>
<dbReference type="OpenTargets" id="ENSG00000131845"/>
<dbReference type="PharmGKB" id="PA37791"/>
<dbReference type="VEuPathDB" id="HostDB:ENSG00000131845"/>
<dbReference type="eggNOG" id="KOG1721">
    <property type="taxonomic scope" value="Eukaryota"/>
</dbReference>
<dbReference type="GeneTree" id="ENSGT00940000161016"/>
<dbReference type="HOGENOM" id="CLU_002678_44_5_1"/>
<dbReference type="InParanoid" id="Q9HCX3"/>
<dbReference type="OMA" id="KPHECNS"/>
<dbReference type="OrthoDB" id="9411774at2759"/>
<dbReference type="PAN-GO" id="Q9HCX3">
    <property type="GO annotations" value="4 GO annotations based on evolutionary models"/>
</dbReference>
<dbReference type="PhylomeDB" id="Q9HCX3"/>
<dbReference type="TreeFam" id="TF339848"/>
<dbReference type="PathwayCommons" id="Q9HCX3"/>
<dbReference type="Reactome" id="R-HSA-212436">
    <property type="pathway name" value="Generic Transcription Pathway"/>
</dbReference>
<dbReference type="SignaLink" id="Q9HCX3"/>
<dbReference type="SIGNOR" id="Q9HCX3"/>
<dbReference type="BioGRID-ORCS" id="57343">
    <property type="hits" value="11 hits in 1179 CRISPR screens"/>
</dbReference>
<dbReference type="GenomeRNAi" id="57343"/>
<dbReference type="Pharos" id="Q9HCX3">
    <property type="development level" value="Tbio"/>
</dbReference>
<dbReference type="PRO" id="PR:Q9HCX3"/>
<dbReference type="Proteomes" id="UP000005640">
    <property type="component" value="Chromosome 19"/>
</dbReference>
<dbReference type="RNAct" id="Q9HCX3">
    <property type="molecule type" value="protein"/>
</dbReference>
<dbReference type="Bgee" id="ENSG00000131845">
    <property type="expression patterns" value="Expressed in secondary oocyte and 183 other cell types or tissues"/>
</dbReference>
<dbReference type="ExpressionAtlas" id="Q9HCX3">
    <property type="expression patterns" value="baseline and differential"/>
</dbReference>
<dbReference type="GO" id="GO:0005634">
    <property type="term" value="C:nucleus"/>
    <property type="evidence" value="ECO:0000318"/>
    <property type="project" value="GO_Central"/>
</dbReference>
<dbReference type="GO" id="GO:0000981">
    <property type="term" value="F:DNA-binding transcription factor activity, RNA polymerase II-specific"/>
    <property type="evidence" value="ECO:0000318"/>
    <property type="project" value="GO_Central"/>
</dbReference>
<dbReference type="GO" id="GO:1990841">
    <property type="term" value="F:promoter-specific chromatin binding"/>
    <property type="evidence" value="ECO:0000314"/>
    <property type="project" value="UniProtKB"/>
</dbReference>
<dbReference type="GO" id="GO:0000978">
    <property type="term" value="F:RNA polymerase II cis-regulatory region sequence-specific DNA binding"/>
    <property type="evidence" value="ECO:0000318"/>
    <property type="project" value="GO_Central"/>
</dbReference>
<dbReference type="GO" id="GO:0008270">
    <property type="term" value="F:zinc ion binding"/>
    <property type="evidence" value="ECO:0007669"/>
    <property type="project" value="UniProtKB-KW"/>
</dbReference>
<dbReference type="GO" id="GO:0001525">
    <property type="term" value="P:angiogenesis"/>
    <property type="evidence" value="ECO:0007669"/>
    <property type="project" value="UniProtKB-KW"/>
</dbReference>
<dbReference type="GO" id="GO:0006346">
    <property type="term" value="P:DNA methylation-dependent constitutive heterochromatin formation"/>
    <property type="evidence" value="ECO:0000315"/>
    <property type="project" value="UniProtKB"/>
</dbReference>
<dbReference type="GO" id="GO:0007229">
    <property type="term" value="P:integrin-mediated signaling pathway"/>
    <property type="evidence" value="ECO:0000315"/>
    <property type="project" value="UniProtKB"/>
</dbReference>
<dbReference type="GO" id="GO:2000811">
    <property type="term" value="P:negative regulation of anoikis"/>
    <property type="evidence" value="ECO:0000315"/>
    <property type="project" value="UniProtKB"/>
</dbReference>
<dbReference type="GO" id="GO:0000122">
    <property type="term" value="P:negative regulation of transcription by RNA polymerase II"/>
    <property type="evidence" value="ECO:0000315"/>
    <property type="project" value="UniProtKB"/>
</dbReference>
<dbReference type="GO" id="GO:0045766">
    <property type="term" value="P:positive regulation of angiogenesis"/>
    <property type="evidence" value="ECO:0000315"/>
    <property type="project" value="UniProtKB"/>
</dbReference>
<dbReference type="GO" id="GO:0030335">
    <property type="term" value="P:positive regulation of cell migration"/>
    <property type="evidence" value="ECO:0000315"/>
    <property type="project" value="UniProtKB"/>
</dbReference>
<dbReference type="GO" id="GO:0050679">
    <property type="term" value="P:positive regulation of epithelial cell proliferation"/>
    <property type="evidence" value="ECO:0000315"/>
    <property type="project" value="UniProtKB"/>
</dbReference>
<dbReference type="GO" id="GO:0045944">
    <property type="term" value="P:positive regulation of transcription by RNA polymerase II"/>
    <property type="evidence" value="ECO:0000314"/>
    <property type="project" value="UniProtKB"/>
</dbReference>
<dbReference type="GO" id="GO:0006357">
    <property type="term" value="P:regulation of transcription by RNA polymerase II"/>
    <property type="evidence" value="ECO:0000318"/>
    <property type="project" value="GO_Central"/>
</dbReference>
<dbReference type="CDD" id="cd07765">
    <property type="entry name" value="KRAB_A-box"/>
    <property type="match status" value="1"/>
</dbReference>
<dbReference type="FunFam" id="3.30.160.60:FF:001478">
    <property type="entry name" value="Zinc finger protein 134"/>
    <property type="match status" value="2"/>
</dbReference>
<dbReference type="FunFam" id="3.30.160.60:FF:000249">
    <property type="entry name" value="Zinc finger protein 154"/>
    <property type="match status" value="1"/>
</dbReference>
<dbReference type="FunFam" id="3.30.160.60:FF:000295">
    <property type="entry name" value="zinc finger protein 19"/>
    <property type="match status" value="2"/>
</dbReference>
<dbReference type="FunFam" id="3.30.160.60:FF:001708">
    <property type="entry name" value="Zinc finger protein 251"/>
    <property type="match status" value="1"/>
</dbReference>
<dbReference type="FunFam" id="3.30.160.60:FF:002129">
    <property type="entry name" value="Zinc finger protein 304"/>
    <property type="match status" value="1"/>
</dbReference>
<dbReference type="FunFam" id="3.30.160.60:FF:002908">
    <property type="entry name" value="Zinc finger protein 304"/>
    <property type="match status" value="1"/>
</dbReference>
<dbReference type="FunFam" id="3.30.160.60:FF:000127">
    <property type="entry name" value="Zinc finger protein 354C"/>
    <property type="match status" value="1"/>
</dbReference>
<dbReference type="FunFam" id="3.30.160.60:FF:000135">
    <property type="entry name" value="Zinc finger protein 358"/>
    <property type="match status" value="1"/>
</dbReference>
<dbReference type="FunFam" id="3.30.160.60:FF:000443">
    <property type="entry name" value="Zinc finger protein 41"/>
    <property type="match status" value="1"/>
</dbReference>
<dbReference type="FunFam" id="3.30.160.60:FF:000200">
    <property type="entry name" value="zinc finger protein 510 isoform X2"/>
    <property type="match status" value="1"/>
</dbReference>
<dbReference type="FunFam" id="3.30.160.60:FF:000281">
    <property type="entry name" value="Zinc finger protein 558 isoform X1"/>
    <property type="match status" value="1"/>
</dbReference>
<dbReference type="FunFam" id="3.30.160.60:FF:000953">
    <property type="entry name" value="Zinc finger protein 691"/>
    <property type="match status" value="1"/>
</dbReference>
<dbReference type="Gene3D" id="6.10.140.140">
    <property type="match status" value="1"/>
</dbReference>
<dbReference type="Gene3D" id="3.30.160.60">
    <property type="entry name" value="Classic Zinc Finger"/>
    <property type="match status" value="15"/>
</dbReference>
<dbReference type="InterPro" id="IPR001909">
    <property type="entry name" value="KRAB"/>
</dbReference>
<dbReference type="InterPro" id="IPR036051">
    <property type="entry name" value="KRAB_dom_sf"/>
</dbReference>
<dbReference type="InterPro" id="IPR036236">
    <property type="entry name" value="Znf_C2H2_sf"/>
</dbReference>
<dbReference type="InterPro" id="IPR013087">
    <property type="entry name" value="Znf_C2H2_type"/>
</dbReference>
<dbReference type="PANTHER" id="PTHR24381">
    <property type="entry name" value="ZINC FINGER PROTEIN"/>
    <property type="match status" value="1"/>
</dbReference>
<dbReference type="PANTHER" id="PTHR24381:SF304">
    <property type="entry name" value="ZINC FINGER PROTEIN 587B"/>
    <property type="match status" value="1"/>
</dbReference>
<dbReference type="Pfam" id="PF01352">
    <property type="entry name" value="KRAB"/>
    <property type="match status" value="1"/>
</dbReference>
<dbReference type="Pfam" id="PF00096">
    <property type="entry name" value="zf-C2H2"/>
    <property type="match status" value="12"/>
</dbReference>
<dbReference type="SMART" id="SM00349">
    <property type="entry name" value="KRAB"/>
    <property type="match status" value="1"/>
</dbReference>
<dbReference type="SMART" id="SM00355">
    <property type="entry name" value="ZnF_C2H2"/>
    <property type="match status" value="16"/>
</dbReference>
<dbReference type="SUPFAM" id="SSF57667">
    <property type="entry name" value="beta-beta-alpha zinc fingers"/>
    <property type="match status" value="10"/>
</dbReference>
<dbReference type="SUPFAM" id="SSF109640">
    <property type="entry name" value="KRAB domain (Kruppel-associated box)"/>
    <property type="match status" value="1"/>
</dbReference>
<dbReference type="PROSITE" id="PS50805">
    <property type="entry name" value="KRAB"/>
    <property type="match status" value="1"/>
</dbReference>
<dbReference type="PROSITE" id="PS00028">
    <property type="entry name" value="ZINC_FINGER_C2H2_1"/>
    <property type="match status" value="16"/>
</dbReference>
<dbReference type="PROSITE" id="PS50157">
    <property type="entry name" value="ZINC_FINGER_C2H2_2"/>
    <property type="match status" value="15"/>
</dbReference>
<organism>
    <name type="scientific">Homo sapiens</name>
    <name type="common">Human</name>
    <dbReference type="NCBI Taxonomy" id="9606"/>
    <lineage>
        <taxon>Eukaryota</taxon>
        <taxon>Metazoa</taxon>
        <taxon>Chordata</taxon>
        <taxon>Craniata</taxon>
        <taxon>Vertebrata</taxon>
        <taxon>Euteleostomi</taxon>
        <taxon>Mammalia</taxon>
        <taxon>Eutheria</taxon>
        <taxon>Euarchontoglires</taxon>
        <taxon>Primates</taxon>
        <taxon>Haplorrhini</taxon>
        <taxon>Catarrhini</taxon>
        <taxon>Hominidae</taxon>
        <taxon>Homo</taxon>
    </lineage>
</organism>
<feature type="chain" id="PRO_0000047523" description="Zinc finger protein 304">
    <location>
        <begin position="1"/>
        <end position="659"/>
    </location>
</feature>
<feature type="domain" description="KRAB" evidence="2">
    <location>
        <begin position="14"/>
        <end position="88"/>
    </location>
</feature>
<feature type="zinc finger region" description="C2H2-type 1" evidence="1">
    <location>
        <begin position="89"/>
        <end position="111"/>
    </location>
</feature>
<feature type="zinc finger region" description="C2H2-type 2" evidence="1">
    <location>
        <begin position="115"/>
        <end position="139"/>
    </location>
</feature>
<feature type="zinc finger region" description="C2H2-type 3" evidence="1">
    <location>
        <begin position="251"/>
        <end position="273"/>
    </location>
</feature>
<feature type="zinc finger region" description="C2H2-type 4" evidence="1">
    <location>
        <begin position="279"/>
        <end position="301"/>
    </location>
</feature>
<feature type="zinc finger region" description="C2H2-type 5" evidence="1">
    <location>
        <begin position="307"/>
        <end position="329"/>
    </location>
</feature>
<feature type="zinc finger region" description="C2H2-type 6" evidence="1">
    <location>
        <begin position="335"/>
        <end position="357"/>
    </location>
</feature>
<feature type="zinc finger region" description="C2H2-type 7" evidence="1">
    <location>
        <begin position="363"/>
        <end position="385"/>
    </location>
</feature>
<feature type="zinc finger region" description="C2H2-type 8" evidence="1">
    <location>
        <begin position="391"/>
        <end position="413"/>
    </location>
</feature>
<feature type="zinc finger region" description="C2H2-type 9" evidence="1">
    <location>
        <begin position="419"/>
        <end position="441"/>
    </location>
</feature>
<feature type="zinc finger region" description="C2H2-type 10" evidence="1">
    <location>
        <begin position="447"/>
        <end position="469"/>
    </location>
</feature>
<feature type="zinc finger region" description="C2H2-type 11" evidence="1">
    <location>
        <begin position="475"/>
        <end position="497"/>
    </location>
</feature>
<feature type="zinc finger region" description="C2H2-type 12" evidence="1">
    <location>
        <begin position="503"/>
        <end position="525"/>
    </location>
</feature>
<feature type="zinc finger region" description="C2H2-type 13" evidence="1">
    <location>
        <begin position="531"/>
        <end position="553"/>
    </location>
</feature>
<feature type="zinc finger region" description="C2H2-type 14" evidence="1">
    <location>
        <begin position="559"/>
        <end position="581"/>
    </location>
</feature>
<feature type="zinc finger region" description="C2H2-type 15" evidence="1">
    <location>
        <begin position="587"/>
        <end position="609"/>
    </location>
</feature>
<feature type="zinc finger region" description="C2H2-type 16" evidence="1">
    <location>
        <begin position="615"/>
        <end position="637"/>
    </location>
</feature>
<feature type="sequence variant" id="VAR_019979" description="In dbSNP:rs862708.">
    <original>L</original>
    <variation>P</variation>
    <location>
        <position position="121"/>
    </location>
</feature>
<feature type="sequence variant" id="VAR_033563" description="In dbSNP:rs862709." evidence="3">
    <original>K</original>
    <variation>E</variation>
    <location>
        <position position="367"/>
    </location>
</feature>
<feature type="sequence conflict" description="In Ref. 1; CAC06610." evidence="7" ref="1">
    <original>V</original>
    <variation>A</variation>
    <location>
        <position position="323"/>
    </location>
</feature>
<feature type="sequence conflict" description="In Ref. 1; CAC06610." evidence="7" ref="1">
    <original>S</original>
    <variation>P</variation>
    <location>
        <position position="334"/>
    </location>
</feature>
<feature type="sequence conflict" description="In Ref. 1; CAC06610." evidence="7" ref="1">
    <original>R</original>
    <variation>S</variation>
    <location>
        <position position="445"/>
    </location>
</feature>
<gene>
    <name evidence="9" type="primary">ZNF304</name>
</gene>
<accession>Q9HCX3</accession>